<keyword id="KW-0012">Acyltransferase</keyword>
<keyword id="KW-0046">Antibiotic resistance</keyword>
<keyword id="KW-0121">Carboxypeptidase</keyword>
<keyword id="KW-1003">Cell membrane</keyword>
<keyword id="KW-0133">Cell shape</keyword>
<keyword id="KW-0134">Cell wall</keyword>
<keyword id="KW-0961">Cell wall biogenesis/degradation</keyword>
<keyword id="KW-0328">Glycosyltransferase</keyword>
<keyword id="KW-0378">Hydrolase</keyword>
<keyword id="KW-0472">Membrane</keyword>
<keyword id="KW-0511">Multifunctional enzyme</keyword>
<keyword id="KW-0573">Peptidoglycan synthesis</keyword>
<keyword id="KW-0645">Protease</keyword>
<keyword id="KW-1185">Reference proteome</keyword>
<keyword id="KW-0964">Secreted</keyword>
<keyword id="KW-0735">Signal-anchor</keyword>
<keyword id="KW-0808">Transferase</keyword>
<keyword id="KW-0812">Transmembrane</keyword>
<keyword id="KW-1133">Transmembrane helix</keyword>
<comment type="function">
    <text evidence="1 3">Cell wall formation. Synthesis of cross-linked peptidoglycan (PG) from the lipid intermediates (By similarity). Binds dansylated lipid II and catalyzes the polymerization of glycan chains. Hydrolyzes S2d (N-benzoyl-D-alanylmercaptoacetic acid) molecule, a synthetic thiolester analog of cell wall stem peptide. Active against bocillin, a fluorescent penicillin. No transpeptidase activity with non-fluorescent lysine-containing lipid II as substrate (By similarity).</text>
</comment>
<comment type="catalytic activity">
    <reaction evidence="3">
        <text>Preferential cleavage: (Ac)2-L-Lys-D-Ala-|-D-Ala. Also transpeptidation of peptidyl-alanyl moieties that are N-acyl substituents of D-alanine.</text>
        <dbReference type="EC" id="3.4.16.4"/>
    </reaction>
</comment>
<comment type="catalytic activity">
    <reaction evidence="3">
        <text>[GlcNAc-(1-&gt;4)-Mur2Ac(oyl-L-Ala-gamma-D-Glu-L-Lys-D-Ala-D-Ala)](n)-di-trans,octa-cis-undecaprenyl diphosphate + beta-D-GlcNAc-(1-&gt;4)-Mur2Ac(oyl-L-Ala-gamma-D-Glu-L-Lys-D-Ala-D-Ala)-di-trans,octa-cis-undecaprenyl diphosphate = [GlcNAc-(1-&gt;4)-Mur2Ac(oyl-L-Ala-gamma-D-Glu-L-Lys-D-Ala-D-Ala)](n+1)-di-trans,octa-cis-undecaprenyl diphosphate + di-trans,octa-cis-undecaprenyl diphosphate + H(+)</text>
        <dbReference type="Rhea" id="RHEA:23708"/>
        <dbReference type="Rhea" id="RHEA-COMP:9602"/>
        <dbReference type="Rhea" id="RHEA-COMP:9603"/>
        <dbReference type="ChEBI" id="CHEBI:15378"/>
        <dbReference type="ChEBI" id="CHEBI:58405"/>
        <dbReference type="ChEBI" id="CHEBI:60033"/>
        <dbReference type="ChEBI" id="CHEBI:78435"/>
        <dbReference type="EC" id="2.4.99.28"/>
    </reaction>
</comment>
<comment type="pathway">
    <text evidence="8">Cell wall biogenesis; peptidoglycan biosynthesis.</text>
</comment>
<comment type="subunit">
    <text evidence="3 6">Homodimer. May also form higher order oligomers. Self-association may depend on its transmembrane and/or cytoplasmic regions (By similarity). Interacts with MacP; interaction is required for the function of this protein (PubMed:29487215).</text>
</comment>
<comment type="subcellular location">
    <subcellularLocation>
        <location evidence="6">Cell membrane</location>
        <topology evidence="3">Single-pass type II membrane protein</topology>
    </subcellularLocation>
    <subcellularLocation>
        <location evidence="8">Secreted</location>
        <location evidence="8">Cell wall</location>
    </subcellularLocation>
    <text evidence="6">Localizes to sites of new peptidoglycan (PG) synthesis at midcell independently of MacP.</text>
</comment>
<comment type="domain">
    <text evidence="3">Has a penicillin-insensitive transglycosylase/glycosyltransferase (GT) N-terminal domain (formation of linear glycan strands) and a penicillin-sensitive transpeptidase C-terminal domain (cross-linking of the peptide subunits). Transmembrane signal-anchor is required for the synthesis of longer, 20-30 disaccharide units containing, glycan chains.</text>
</comment>
<comment type="disruption phenotype">
    <text evidence="6">Deletion of this gene with concomitant depletion of PBP1a leads to progressive reduction in cell size before ultimate lysis. Cell wall synthesis is also dramatically reduced in these cells.</text>
</comment>
<comment type="similarity">
    <text evidence="8">In the N-terminal section; belongs to the glycosyltransferase 51 family.</text>
</comment>
<comment type="similarity">
    <text evidence="8">In the C-terminal section; belongs to the transpeptidase family.</text>
</comment>
<evidence type="ECO:0000250" key="1">
    <source>
        <dbReference type="UniProtKB" id="P02918"/>
    </source>
</evidence>
<evidence type="ECO:0000250" key="2">
    <source>
        <dbReference type="UniProtKB" id="P02919"/>
    </source>
</evidence>
<evidence type="ECO:0000250" key="3">
    <source>
        <dbReference type="UniProtKB" id="Q8DNB6"/>
    </source>
</evidence>
<evidence type="ECO:0000255" key="4"/>
<evidence type="ECO:0000256" key="5">
    <source>
        <dbReference type="SAM" id="MobiDB-lite"/>
    </source>
</evidence>
<evidence type="ECO:0000269" key="6">
    <source>
    </source>
</evidence>
<evidence type="ECO:0000303" key="7">
    <source>
    </source>
</evidence>
<evidence type="ECO:0000305" key="8"/>
<evidence type="ECO:0000312" key="9">
    <source>
        <dbReference type="EMBL" id="ABJ54295.1"/>
    </source>
</evidence>
<evidence type="ECO:0000312" key="10">
    <source>
        <dbReference type="Proteomes" id="UP000001452"/>
    </source>
</evidence>
<name>PBP2A_STRP2</name>
<protein>
    <recommendedName>
        <fullName evidence="8">Penicillin-binding protein 2a</fullName>
        <shortName evidence="7">PBP2a</shortName>
    </recommendedName>
    <alternativeName>
        <fullName evidence="7">Cell wall synthase PBP2a</fullName>
    </alternativeName>
    <domain>
        <recommendedName>
            <fullName evidence="8">Penicillin-insensitive transglycosylase</fullName>
            <ecNumber evidence="3">2.4.99.28</ecNumber>
        </recommendedName>
        <alternativeName>
            <fullName evidence="8">Peptidoglycan TGase</fullName>
        </alternativeName>
        <alternativeName>
            <fullName evidence="8">Peptidoglycan glycosyltransferase</fullName>
        </alternativeName>
    </domain>
    <domain>
        <recommendedName>
            <fullName evidence="8">Penicillin-sensitive transpeptidase</fullName>
            <ecNumber evidence="3">3.4.16.4</ecNumber>
        </recommendedName>
        <alternativeName>
            <fullName evidence="8">DD-transpeptidase</fullName>
        </alternativeName>
    </domain>
</protein>
<organism evidence="9">
    <name type="scientific">Streptococcus pneumoniae serotype 2 (strain D39 / NCTC 7466)</name>
    <dbReference type="NCBI Taxonomy" id="373153"/>
    <lineage>
        <taxon>Bacteria</taxon>
        <taxon>Bacillati</taxon>
        <taxon>Bacillota</taxon>
        <taxon>Bacilli</taxon>
        <taxon>Lactobacillales</taxon>
        <taxon>Streptococcaceae</taxon>
        <taxon>Streptococcus</taxon>
    </lineage>
</organism>
<dbReference type="EC" id="2.4.99.28" evidence="3"/>
<dbReference type="EC" id="3.4.16.4" evidence="3"/>
<dbReference type="EMBL" id="CP000410">
    <property type="protein sequence ID" value="ABJ54295.1"/>
    <property type="molecule type" value="Genomic_DNA"/>
</dbReference>
<dbReference type="RefSeq" id="WP_000762624.1">
    <property type="nucleotide sequence ID" value="NZ_JAMLJR010000015.1"/>
</dbReference>
<dbReference type="SMR" id="A0A0H2ZMF9"/>
<dbReference type="PaxDb" id="373153-SPD_1821"/>
<dbReference type="KEGG" id="spd:SPD_1821"/>
<dbReference type="eggNOG" id="COG0744">
    <property type="taxonomic scope" value="Bacteria"/>
</dbReference>
<dbReference type="HOGENOM" id="CLU_006354_2_2_9"/>
<dbReference type="BioCyc" id="SPNE373153:G1G6V-1967-MONOMER"/>
<dbReference type="UniPathway" id="UPA00219"/>
<dbReference type="Proteomes" id="UP000001452">
    <property type="component" value="Chromosome"/>
</dbReference>
<dbReference type="GO" id="GO:0005576">
    <property type="term" value="C:extracellular region"/>
    <property type="evidence" value="ECO:0007669"/>
    <property type="project" value="UniProtKB-KW"/>
</dbReference>
<dbReference type="GO" id="GO:0030288">
    <property type="term" value="C:outer membrane-bounded periplasmic space"/>
    <property type="evidence" value="ECO:0007669"/>
    <property type="project" value="TreeGrafter"/>
</dbReference>
<dbReference type="GO" id="GO:0005886">
    <property type="term" value="C:plasma membrane"/>
    <property type="evidence" value="ECO:0007669"/>
    <property type="project" value="UniProtKB-SubCell"/>
</dbReference>
<dbReference type="GO" id="GO:0016746">
    <property type="term" value="F:acyltransferase activity"/>
    <property type="evidence" value="ECO:0007669"/>
    <property type="project" value="UniProtKB-KW"/>
</dbReference>
<dbReference type="GO" id="GO:0008658">
    <property type="term" value="F:penicillin binding"/>
    <property type="evidence" value="ECO:0007669"/>
    <property type="project" value="InterPro"/>
</dbReference>
<dbReference type="GO" id="GO:0008955">
    <property type="term" value="F:peptidoglycan glycosyltransferase activity"/>
    <property type="evidence" value="ECO:0007669"/>
    <property type="project" value="TreeGrafter"/>
</dbReference>
<dbReference type="GO" id="GO:0009002">
    <property type="term" value="F:serine-type D-Ala-D-Ala carboxypeptidase activity"/>
    <property type="evidence" value="ECO:0007669"/>
    <property type="project" value="UniProtKB-EC"/>
</dbReference>
<dbReference type="GO" id="GO:0071555">
    <property type="term" value="P:cell wall organization"/>
    <property type="evidence" value="ECO:0007669"/>
    <property type="project" value="UniProtKB-KW"/>
</dbReference>
<dbReference type="GO" id="GO:0009252">
    <property type="term" value="P:peptidoglycan biosynthetic process"/>
    <property type="evidence" value="ECO:0007669"/>
    <property type="project" value="UniProtKB-UniPathway"/>
</dbReference>
<dbReference type="GO" id="GO:0006508">
    <property type="term" value="P:proteolysis"/>
    <property type="evidence" value="ECO:0007669"/>
    <property type="project" value="UniProtKB-KW"/>
</dbReference>
<dbReference type="GO" id="GO:0008360">
    <property type="term" value="P:regulation of cell shape"/>
    <property type="evidence" value="ECO:0007669"/>
    <property type="project" value="UniProtKB-KW"/>
</dbReference>
<dbReference type="GO" id="GO:0046677">
    <property type="term" value="P:response to antibiotic"/>
    <property type="evidence" value="ECO:0007669"/>
    <property type="project" value="UniProtKB-KW"/>
</dbReference>
<dbReference type="FunFam" id="1.10.3810.10:FF:000001">
    <property type="entry name" value="Penicillin-binding protein 1A"/>
    <property type="match status" value="1"/>
</dbReference>
<dbReference type="FunFam" id="3.40.710.10:FF:000043">
    <property type="entry name" value="Penicillin-binding protein 2A"/>
    <property type="match status" value="1"/>
</dbReference>
<dbReference type="Gene3D" id="6.20.370.110">
    <property type="match status" value="1"/>
</dbReference>
<dbReference type="Gene3D" id="1.10.3810.10">
    <property type="entry name" value="Biosynthetic peptidoglycan transglycosylase-like"/>
    <property type="match status" value="1"/>
</dbReference>
<dbReference type="Gene3D" id="3.40.710.10">
    <property type="entry name" value="DD-peptidase/beta-lactamase superfamily"/>
    <property type="match status" value="1"/>
</dbReference>
<dbReference type="InterPro" id="IPR012338">
    <property type="entry name" value="Beta-lactam/transpept-like"/>
</dbReference>
<dbReference type="InterPro" id="IPR053473">
    <property type="entry name" value="Cell_Wall_Biosynth_Protein"/>
</dbReference>
<dbReference type="InterPro" id="IPR001264">
    <property type="entry name" value="Glyco_trans_51"/>
</dbReference>
<dbReference type="InterPro" id="IPR050396">
    <property type="entry name" value="Glycosyltr_51/Transpeptidase"/>
</dbReference>
<dbReference type="InterPro" id="IPR023346">
    <property type="entry name" value="Lysozyme-like_dom_sf"/>
</dbReference>
<dbReference type="InterPro" id="IPR036950">
    <property type="entry name" value="PBP_transglycosylase"/>
</dbReference>
<dbReference type="InterPro" id="IPR001460">
    <property type="entry name" value="PCN-bd_Tpept"/>
</dbReference>
<dbReference type="NCBIfam" id="TIGR02074">
    <property type="entry name" value="PBP_1a_fam"/>
    <property type="match status" value="1"/>
</dbReference>
<dbReference type="NCBIfam" id="NF038276">
    <property type="entry name" value="strep_PBP2A"/>
    <property type="match status" value="1"/>
</dbReference>
<dbReference type="PANTHER" id="PTHR32282">
    <property type="entry name" value="BINDING PROTEIN TRANSPEPTIDASE, PUTATIVE-RELATED"/>
    <property type="match status" value="1"/>
</dbReference>
<dbReference type="PANTHER" id="PTHR32282:SF32">
    <property type="entry name" value="PENICILLIN-BINDING PROTEIN 2A"/>
    <property type="match status" value="1"/>
</dbReference>
<dbReference type="Pfam" id="PF00912">
    <property type="entry name" value="Transgly"/>
    <property type="match status" value="1"/>
</dbReference>
<dbReference type="Pfam" id="PF00905">
    <property type="entry name" value="Transpeptidase"/>
    <property type="match status" value="1"/>
</dbReference>
<dbReference type="SUPFAM" id="SSF56601">
    <property type="entry name" value="beta-lactamase/transpeptidase-like"/>
    <property type="match status" value="1"/>
</dbReference>
<dbReference type="SUPFAM" id="SSF53955">
    <property type="entry name" value="Lysozyme-like"/>
    <property type="match status" value="1"/>
</dbReference>
<proteinExistence type="evidence at protein level"/>
<reference evidence="9 10" key="1">
    <citation type="journal article" date="2007" name="J. Bacteriol.">
        <title>Genome sequence of Avery's virulent serotype 2 strain D39 of Streptococcus pneumoniae and comparison with that of unencapsulated laboratory strain R6.</title>
        <authorList>
            <person name="Lanie J.A."/>
            <person name="Ng W.-L."/>
            <person name="Kazmierczak K.M."/>
            <person name="Andrzejewski T.M."/>
            <person name="Davidsen T.M."/>
            <person name="Wayne K.J."/>
            <person name="Tettelin H."/>
            <person name="Glass J.I."/>
            <person name="Winkler M.E."/>
        </authorList>
    </citation>
    <scope>NUCLEOTIDE SEQUENCE [LARGE SCALE GENOMIC DNA]</scope>
    <source>
        <strain evidence="10">D39 / NCTC 7466</strain>
    </source>
</reference>
<reference key="2">
    <citation type="journal article" date="2018" name="Proc. Natl. Acad. Sci. U.S.A.">
        <title>Phosphorylation-dependent activation of the cell wall synthase PBP2a in Streptococcus pneumoniae by MacP.</title>
        <authorList>
            <person name="Fenton A.K."/>
            <person name="Manuse S."/>
            <person name="Flores-Kim J."/>
            <person name="Garcia P.S."/>
            <person name="Mercy C."/>
            <person name="Grangeasse C."/>
            <person name="Bernhardt T.G."/>
            <person name="Rudner D.Z."/>
        </authorList>
    </citation>
    <scope>INTERACTION WITH MACP</scope>
    <scope>SUBCELLULAR LOCATION</scope>
    <scope>DISRUPTION PHENOTYPE</scope>
    <source>
        <strain evidence="7">D39 / NCTC 7466</strain>
    </source>
</reference>
<feature type="chain" id="PRO_0000452972" description="Penicillin-binding protein 2a">
    <location>
        <begin position="1"/>
        <end position="731"/>
    </location>
</feature>
<feature type="topological domain" description="Cytoplasmic" evidence="3 4">
    <location>
        <begin position="1"/>
        <end position="56"/>
    </location>
</feature>
<feature type="transmembrane region" description="Helical; Signal-anchor for type II membrane protein" evidence="3 4">
    <location>
        <begin position="57"/>
        <end position="77"/>
    </location>
</feature>
<feature type="topological domain" description="Extracellular" evidence="3 4">
    <location>
        <begin position="78"/>
        <end position="731"/>
    </location>
</feature>
<feature type="region of interest" description="Transglycosylase" evidence="3">
    <location>
        <begin position="78"/>
        <end position="300"/>
    </location>
</feature>
<feature type="region of interest" description="Hydrophobic; associated with cytoplasmic membrane. Required for transglycosylase activity, but not for lipid II binding" evidence="3">
    <location>
        <begin position="78"/>
        <end position="156"/>
    </location>
</feature>
<feature type="region of interest" description="Transpeptidase" evidence="3">
    <location>
        <begin position="301"/>
        <end position="731"/>
    </location>
</feature>
<feature type="region of interest" description="Disordered" evidence="5">
    <location>
        <begin position="674"/>
        <end position="694"/>
    </location>
</feature>
<feature type="compositionally biased region" description="Polar residues" evidence="5">
    <location>
        <begin position="676"/>
        <end position="690"/>
    </location>
</feature>
<feature type="active site" description="Proton donor; for transglycosylase activity" evidence="3">
    <location>
        <position position="131"/>
    </location>
</feature>
<feature type="active site" description="Acyl-ester intermediate; for transpeptidase activity" evidence="2">
    <location>
        <position position="410"/>
    </location>
</feature>
<gene>
    <name evidence="9" type="primary">pbp2a</name>
    <name evidence="9" type="ordered locus">SPD_1821</name>
</gene>
<accession>A0A0H2ZMF9</accession>
<sequence length="731" mass="80799">MKLDKLFEKFLSLFKKETSELEDSDSTILRRSRSDRKKLAQVGPIRKFWRRYHLTKIILILGLSAGLLVGIYLFAVAKSTNVNDLQNALKTRTLIFDREEKEAGALSGQKGTYVELTDISKNLQNAVIATEDRSFYKNDGINYGRFFLAIVTAGRSGGGSTITQQLAKNAYLSQDQTVERKAKEFFLALELSKKYSKEQILTMYLNNAYFGNGVWGVEDASKKYFGVSASEVSLDQAATLAGMLKGPELYNPLNSVEDSTNRRDTVLQNMVAAGYIDKNQETEAAEVDMTSQLHDKYEGKISDYRYPSYFDAVVNEAVSKYNLTEEEIVNNGYRIYTELDQNYQANMQIVYENTSLFPRAEDGTFAQSGSVALEPKTGGVRGVVGQVADNDKTGFRNFNYATQSKRSPGSTIKPLVVYTPAVEAGWALNKQLDNHTMQYDSYKVDNYAGIKTSREVPMYQSLAESLNLPAVATVNDLGVDKAFEAGEKFGLNMEKVDRVLGVALGSGVETNPLQMAQAYAAFANEGLMPEAHFISRIENASGQVIASHKNSQKRVIDKSVADKMTSMMLGTFTNGTGISSSPADYVMAGKTGTTEAVFNPEYTSDQWVIGYTPDVVISHWLGFPTTDENHYLAGSTSNGAAHVFRNIANTILPYTPGSTFTVENAYKQNGIAPANTKRQVQTNDNSQTDDNLSDIRGRAQSLVDEASRAISDAKIKEKAQTIWDSIVNLFR</sequence>